<sequence length="172" mass="19781">MLCPFCSYSDNRVLESRLAEEGESVRRRRECKQCRRRFTTYERIEFVPTVVIKRNGRREAFDRSKVLRGVMIACEKTDVPAELIEQLVDDLQAELQQRSSREVTSAEIGEMVLALLKPLNEVAYVRFASVYRKFKGVADFVSELQTFEANAELDSLKARLERLAAAHDQSAD</sequence>
<feature type="chain" id="PRO_0000182302" description="Transcriptional repressor NrdR">
    <location>
        <begin position="1"/>
        <end position="172"/>
    </location>
</feature>
<feature type="domain" description="ATP-cone" evidence="1">
    <location>
        <begin position="49"/>
        <end position="139"/>
    </location>
</feature>
<feature type="zinc finger region" evidence="1">
    <location>
        <begin position="3"/>
        <end position="34"/>
    </location>
</feature>
<keyword id="KW-0067">ATP-binding</keyword>
<keyword id="KW-0238">DNA-binding</keyword>
<keyword id="KW-0479">Metal-binding</keyword>
<keyword id="KW-0547">Nucleotide-binding</keyword>
<keyword id="KW-1185">Reference proteome</keyword>
<keyword id="KW-0678">Repressor</keyword>
<keyword id="KW-0804">Transcription</keyword>
<keyword id="KW-0805">Transcription regulation</keyword>
<keyword id="KW-0862">Zinc</keyword>
<keyword id="KW-0863">Zinc-finger</keyword>
<organism>
    <name type="scientific">Gloeobacter violaceus (strain ATCC 29082 / PCC 7421)</name>
    <dbReference type="NCBI Taxonomy" id="251221"/>
    <lineage>
        <taxon>Bacteria</taxon>
        <taxon>Bacillati</taxon>
        <taxon>Cyanobacteriota</taxon>
        <taxon>Cyanophyceae</taxon>
        <taxon>Gloeobacterales</taxon>
        <taxon>Gloeobacteraceae</taxon>
        <taxon>Gloeobacter</taxon>
    </lineage>
</organism>
<comment type="function">
    <text evidence="1">Negatively regulates transcription of bacterial ribonucleotide reductase nrd genes and operons by binding to NrdR-boxes.</text>
</comment>
<comment type="cofactor">
    <cofactor evidence="1">
        <name>Zn(2+)</name>
        <dbReference type="ChEBI" id="CHEBI:29105"/>
    </cofactor>
    <text evidence="1">Binds 1 zinc ion.</text>
</comment>
<comment type="similarity">
    <text evidence="1">Belongs to the NrdR family.</text>
</comment>
<reference key="1">
    <citation type="journal article" date="2003" name="DNA Res.">
        <title>Complete genome structure of Gloeobacter violaceus PCC 7421, a cyanobacterium that lacks thylakoids.</title>
        <authorList>
            <person name="Nakamura Y."/>
            <person name="Kaneko T."/>
            <person name="Sato S."/>
            <person name="Mimuro M."/>
            <person name="Miyashita H."/>
            <person name="Tsuchiya T."/>
            <person name="Sasamoto S."/>
            <person name="Watanabe A."/>
            <person name="Kawashima K."/>
            <person name="Kishida Y."/>
            <person name="Kiyokawa C."/>
            <person name="Kohara M."/>
            <person name="Matsumoto M."/>
            <person name="Matsuno A."/>
            <person name="Nakazaki N."/>
            <person name="Shimpo S."/>
            <person name="Takeuchi C."/>
            <person name="Yamada M."/>
            <person name="Tabata S."/>
        </authorList>
    </citation>
    <scope>NUCLEOTIDE SEQUENCE [LARGE SCALE GENOMIC DNA]</scope>
    <source>
        <strain>ATCC 29082 / PCC 7421</strain>
    </source>
</reference>
<name>NRDR_GLOVI</name>
<evidence type="ECO:0000255" key="1">
    <source>
        <dbReference type="HAMAP-Rule" id="MF_00440"/>
    </source>
</evidence>
<protein>
    <recommendedName>
        <fullName evidence="1">Transcriptional repressor NrdR</fullName>
    </recommendedName>
</protein>
<accession>Q7NPB2</accession>
<dbReference type="EMBL" id="BA000045">
    <property type="protein sequence ID" value="BAC88084.1"/>
    <property type="molecule type" value="Genomic_DNA"/>
</dbReference>
<dbReference type="RefSeq" id="NP_923089.1">
    <property type="nucleotide sequence ID" value="NC_005125.1"/>
</dbReference>
<dbReference type="RefSeq" id="WP_011140147.1">
    <property type="nucleotide sequence ID" value="NC_005125.1"/>
</dbReference>
<dbReference type="SMR" id="Q7NPB2"/>
<dbReference type="FunCoup" id="Q7NPB2">
    <property type="interactions" value="19"/>
</dbReference>
<dbReference type="STRING" id="251221.gene:10757612"/>
<dbReference type="EnsemblBacteria" id="BAC88084">
    <property type="protein sequence ID" value="BAC88084"/>
    <property type="gene ID" value="BAC88084"/>
</dbReference>
<dbReference type="KEGG" id="gvi:gll0143"/>
<dbReference type="PATRIC" id="fig|251221.4.peg.145"/>
<dbReference type="eggNOG" id="COG1327">
    <property type="taxonomic scope" value="Bacteria"/>
</dbReference>
<dbReference type="HOGENOM" id="CLU_108412_0_0_3"/>
<dbReference type="InParanoid" id="Q7NPB2"/>
<dbReference type="OrthoDB" id="9807461at2"/>
<dbReference type="PhylomeDB" id="Q7NPB2"/>
<dbReference type="Proteomes" id="UP000000557">
    <property type="component" value="Chromosome"/>
</dbReference>
<dbReference type="GO" id="GO:0005524">
    <property type="term" value="F:ATP binding"/>
    <property type="evidence" value="ECO:0007669"/>
    <property type="project" value="UniProtKB-KW"/>
</dbReference>
<dbReference type="GO" id="GO:0003690">
    <property type="term" value="F:double-stranded DNA binding"/>
    <property type="evidence" value="ECO:0000318"/>
    <property type="project" value="GO_Central"/>
</dbReference>
<dbReference type="GO" id="GO:0008270">
    <property type="term" value="F:zinc ion binding"/>
    <property type="evidence" value="ECO:0007669"/>
    <property type="project" value="UniProtKB-UniRule"/>
</dbReference>
<dbReference type="GO" id="GO:0045892">
    <property type="term" value="P:negative regulation of DNA-templated transcription"/>
    <property type="evidence" value="ECO:0000318"/>
    <property type="project" value="GO_Central"/>
</dbReference>
<dbReference type="HAMAP" id="MF_00440">
    <property type="entry name" value="NrdR"/>
    <property type="match status" value="1"/>
</dbReference>
<dbReference type="InterPro" id="IPR005144">
    <property type="entry name" value="ATP-cone_dom"/>
</dbReference>
<dbReference type="InterPro" id="IPR055173">
    <property type="entry name" value="NrdR-like_N"/>
</dbReference>
<dbReference type="InterPro" id="IPR003796">
    <property type="entry name" value="RNR_NrdR-like"/>
</dbReference>
<dbReference type="NCBIfam" id="TIGR00244">
    <property type="entry name" value="transcriptional regulator NrdR"/>
    <property type="match status" value="1"/>
</dbReference>
<dbReference type="PANTHER" id="PTHR30455">
    <property type="entry name" value="TRANSCRIPTIONAL REPRESSOR NRDR"/>
    <property type="match status" value="1"/>
</dbReference>
<dbReference type="PANTHER" id="PTHR30455:SF2">
    <property type="entry name" value="TRANSCRIPTIONAL REPRESSOR NRDR"/>
    <property type="match status" value="1"/>
</dbReference>
<dbReference type="Pfam" id="PF03477">
    <property type="entry name" value="ATP-cone"/>
    <property type="match status" value="1"/>
</dbReference>
<dbReference type="Pfam" id="PF22811">
    <property type="entry name" value="Zn_ribbon_NrdR"/>
    <property type="match status" value="1"/>
</dbReference>
<dbReference type="PROSITE" id="PS51161">
    <property type="entry name" value="ATP_CONE"/>
    <property type="match status" value="1"/>
</dbReference>
<gene>
    <name evidence="1" type="primary">nrdR</name>
    <name type="ordered locus">gll0143</name>
</gene>
<proteinExistence type="inferred from homology"/>